<feature type="chain" id="PRO_1000062712" description="UPF0386 protein TM1040_0419">
    <location>
        <begin position="1"/>
        <end position="85"/>
    </location>
</feature>
<feature type="region of interest" description="Disordered" evidence="2">
    <location>
        <begin position="62"/>
        <end position="85"/>
    </location>
</feature>
<comment type="similarity">
    <text evidence="1">Belongs to the UPF0386 family.</text>
</comment>
<protein>
    <recommendedName>
        <fullName evidence="1">UPF0386 protein TM1040_0419</fullName>
    </recommendedName>
</protein>
<accession>Q1GJL4</accession>
<keyword id="KW-1185">Reference proteome</keyword>
<name>Y419_RUEST</name>
<proteinExistence type="inferred from homology"/>
<gene>
    <name type="ordered locus">TM1040_0419</name>
</gene>
<reference key="1">
    <citation type="submission" date="2006-05" db="EMBL/GenBank/DDBJ databases">
        <title>Complete sequence of chromosome of Silicibacter sp. TM1040.</title>
        <authorList>
            <consortium name="US DOE Joint Genome Institute"/>
            <person name="Copeland A."/>
            <person name="Lucas S."/>
            <person name="Lapidus A."/>
            <person name="Barry K."/>
            <person name="Detter J.C."/>
            <person name="Glavina del Rio T."/>
            <person name="Hammon N."/>
            <person name="Israni S."/>
            <person name="Dalin E."/>
            <person name="Tice H."/>
            <person name="Pitluck S."/>
            <person name="Brettin T."/>
            <person name="Bruce D."/>
            <person name="Han C."/>
            <person name="Tapia R."/>
            <person name="Goodwin L."/>
            <person name="Thompson L.S."/>
            <person name="Gilna P."/>
            <person name="Schmutz J."/>
            <person name="Larimer F."/>
            <person name="Land M."/>
            <person name="Hauser L."/>
            <person name="Kyrpides N."/>
            <person name="Kim E."/>
            <person name="Belas R."/>
            <person name="Moran M.A."/>
            <person name="Buchan A."/>
            <person name="Gonzalez J.M."/>
            <person name="Schell M.A."/>
            <person name="Sun F."/>
            <person name="Richardson P."/>
        </authorList>
    </citation>
    <scope>NUCLEOTIDE SEQUENCE [LARGE SCALE GENOMIC DNA]</scope>
    <source>
        <strain>TM1040</strain>
    </source>
</reference>
<sequence>MNISKNEQRVLHVLAQGGRILYERAPNGRVTEVTCYTREGLILANCKLDVFNKLRRKRLVESKSSRPYQISEKGRRSVRAQLDNR</sequence>
<evidence type="ECO:0000255" key="1">
    <source>
        <dbReference type="HAMAP-Rule" id="MF_00827"/>
    </source>
</evidence>
<evidence type="ECO:0000256" key="2">
    <source>
        <dbReference type="SAM" id="MobiDB-lite"/>
    </source>
</evidence>
<organism>
    <name type="scientific">Ruegeria sp. (strain TM1040)</name>
    <name type="common">Silicibacter sp.</name>
    <dbReference type="NCBI Taxonomy" id="292414"/>
    <lineage>
        <taxon>Bacteria</taxon>
        <taxon>Pseudomonadati</taxon>
        <taxon>Pseudomonadota</taxon>
        <taxon>Alphaproteobacteria</taxon>
        <taxon>Rhodobacterales</taxon>
        <taxon>Roseobacteraceae</taxon>
        <taxon>Ruegeria</taxon>
    </lineage>
</organism>
<dbReference type="EMBL" id="CP000377">
    <property type="protein sequence ID" value="ABF63152.1"/>
    <property type="molecule type" value="Genomic_DNA"/>
</dbReference>
<dbReference type="RefSeq" id="WP_011537767.1">
    <property type="nucleotide sequence ID" value="NC_008044.1"/>
</dbReference>
<dbReference type="SMR" id="Q1GJL4"/>
<dbReference type="STRING" id="292414.TM1040_0419"/>
<dbReference type="KEGG" id="sit:TM1040_0419"/>
<dbReference type="eggNOG" id="COG3811">
    <property type="taxonomic scope" value="Bacteria"/>
</dbReference>
<dbReference type="HOGENOM" id="CLU_164736_0_0_5"/>
<dbReference type="OrthoDB" id="7204880at2"/>
<dbReference type="Proteomes" id="UP000000636">
    <property type="component" value="Chromosome"/>
</dbReference>
<dbReference type="HAMAP" id="MF_00827">
    <property type="entry name" value="UPF0386"/>
    <property type="match status" value="1"/>
</dbReference>
<dbReference type="InterPro" id="IPR018654">
    <property type="entry name" value="YjhX_toxin"/>
</dbReference>
<dbReference type="NCBIfam" id="NF010240">
    <property type="entry name" value="PRK13687.1"/>
    <property type="match status" value="1"/>
</dbReference>
<dbReference type="Pfam" id="PF09857">
    <property type="entry name" value="YjhX_toxin"/>
    <property type="match status" value="1"/>
</dbReference>